<accession>A5CU17</accession>
<sequence length="300" mass="31416">MTAVVLDGVATASAVKSELAVRIRALREQGLVPGLGTLLVGDDPGSRAYVAGKHRDCAEVGIESIRVDLPADATEADVRLAIERLNSDPAVTGYIVQLPLPAGIDENAMLELIDPSKDADGLHPTNLGRLVLGVQGELTSPLPCTPAGIVEMLQRYEVPIAGQHVVVVGRGLTVGRPLGLLLTRKGLDATVTLTHSRTRDLEQEVRRADIVVAAVGVAHLIKPEWVKPGAAVLDVGITRVVDPETGKARLTGDVDPAVAEVAGHLSPNPRGVGPMTRAMLLANVVQAAERDARLAAELRG</sequence>
<comment type="function">
    <text evidence="1">Catalyzes the oxidation of 5,10-methylenetetrahydrofolate to 5,10-methenyltetrahydrofolate and then the hydrolysis of 5,10-methenyltetrahydrofolate to 10-formyltetrahydrofolate.</text>
</comment>
<comment type="catalytic activity">
    <reaction evidence="1">
        <text>(6R)-5,10-methylene-5,6,7,8-tetrahydrofolate + NADP(+) = (6R)-5,10-methenyltetrahydrofolate + NADPH</text>
        <dbReference type="Rhea" id="RHEA:22812"/>
        <dbReference type="ChEBI" id="CHEBI:15636"/>
        <dbReference type="ChEBI" id="CHEBI:57455"/>
        <dbReference type="ChEBI" id="CHEBI:57783"/>
        <dbReference type="ChEBI" id="CHEBI:58349"/>
        <dbReference type="EC" id="1.5.1.5"/>
    </reaction>
</comment>
<comment type="catalytic activity">
    <reaction evidence="1">
        <text>(6R)-5,10-methenyltetrahydrofolate + H2O = (6R)-10-formyltetrahydrofolate + H(+)</text>
        <dbReference type="Rhea" id="RHEA:23700"/>
        <dbReference type="ChEBI" id="CHEBI:15377"/>
        <dbReference type="ChEBI" id="CHEBI:15378"/>
        <dbReference type="ChEBI" id="CHEBI:57455"/>
        <dbReference type="ChEBI" id="CHEBI:195366"/>
        <dbReference type="EC" id="3.5.4.9"/>
    </reaction>
</comment>
<comment type="pathway">
    <text evidence="1">One-carbon metabolism; tetrahydrofolate interconversion.</text>
</comment>
<comment type="subunit">
    <text evidence="1">Homodimer.</text>
</comment>
<comment type="similarity">
    <text evidence="1">Belongs to the tetrahydrofolate dehydrogenase/cyclohydrolase family.</text>
</comment>
<reference key="1">
    <citation type="journal article" date="2008" name="J. Bacteriol.">
        <title>The genome sequence of the tomato-pathogenic actinomycete Clavibacter michiganensis subsp. michiganensis NCPPB382 reveals a large island involved in pathogenicity.</title>
        <authorList>
            <person name="Gartemann K.-H."/>
            <person name="Abt B."/>
            <person name="Bekel T."/>
            <person name="Burger A."/>
            <person name="Engemann J."/>
            <person name="Fluegel M."/>
            <person name="Gaigalat L."/>
            <person name="Goesmann A."/>
            <person name="Graefen I."/>
            <person name="Kalinowski J."/>
            <person name="Kaup O."/>
            <person name="Kirchner O."/>
            <person name="Krause L."/>
            <person name="Linke B."/>
            <person name="McHardy A."/>
            <person name="Meyer F."/>
            <person name="Pohle S."/>
            <person name="Rueckert C."/>
            <person name="Schneiker S."/>
            <person name="Zellermann E.-M."/>
            <person name="Puehler A."/>
            <person name="Eichenlaub R."/>
            <person name="Kaiser O."/>
            <person name="Bartels D."/>
        </authorList>
    </citation>
    <scope>NUCLEOTIDE SEQUENCE [LARGE SCALE GENOMIC DNA]</scope>
    <source>
        <strain>NCPPB 382</strain>
    </source>
</reference>
<organism>
    <name type="scientific">Clavibacter michiganensis subsp. michiganensis (strain NCPPB 382)</name>
    <dbReference type="NCBI Taxonomy" id="443906"/>
    <lineage>
        <taxon>Bacteria</taxon>
        <taxon>Bacillati</taxon>
        <taxon>Actinomycetota</taxon>
        <taxon>Actinomycetes</taxon>
        <taxon>Micrococcales</taxon>
        <taxon>Microbacteriaceae</taxon>
        <taxon>Clavibacter</taxon>
    </lineage>
</organism>
<feature type="chain" id="PRO_0000318784" description="Bifunctional protein FolD">
    <location>
        <begin position="1"/>
        <end position="300"/>
    </location>
</feature>
<feature type="binding site" evidence="1">
    <location>
        <begin position="169"/>
        <end position="171"/>
    </location>
    <ligand>
        <name>NADP(+)</name>
        <dbReference type="ChEBI" id="CHEBI:58349"/>
    </ligand>
</feature>
<feature type="binding site" evidence="1">
    <location>
        <position position="196"/>
    </location>
    <ligand>
        <name>NADP(+)</name>
        <dbReference type="ChEBI" id="CHEBI:58349"/>
    </ligand>
</feature>
<feature type="binding site" evidence="1">
    <location>
        <position position="237"/>
    </location>
    <ligand>
        <name>NADP(+)</name>
        <dbReference type="ChEBI" id="CHEBI:58349"/>
    </ligand>
</feature>
<name>FOLD_CLAM3</name>
<keyword id="KW-0028">Amino-acid biosynthesis</keyword>
<keyword id="KW-0368">Histidine biosynthesis</keyword>
<keyword id="KW-0378">Hydrolase</keyword>
<keyword id="KW-0486">Methionine biosynthesis</keyword>
<keyword id="KW-0511">Multifunctional enzyme</keyword>
<keyword id="KW-0521">NADP</keyword>
<keyword id="KW-0554">One-carbon metabolism</keyword>
<keyword id="KW-0560">Oxidoreductase</keyword>
<keyword id="KW-0658">Purine biosynthesis</keyword>
<protein>
    <recommendedName>
        <fullName evidence="1">Bifunctional protein FolD</fullName>
    </recommendedName>
    <domain>
        <recommendedName>
            <fullName evidence="1">Methylenetetrahydrofolate dehydrogenase</fullName>
            <ecNumber evidence="1">1.5.1.5</ecNumber>
        </recommendedName>
    </domain>
    <domain>
        <recommendedName>
            <fullName evidence="1">Methenyltetrahydrofolate cyclohydrolase</fullName>
            <ecNumber evidence="1">3.5.4.9</ecNumber>
        </recommendedName>
    </domain>
</protein>
<dbReference type="EC" id="1.5.1.5" evidence="1"/>
<dbReference type="EC" id="3.5.4.9" evidence="1"/>
<dbReference type="EMBL" id="AM711867">
    <property type="protein sequence ID" value="CAN02603.1"/>
    <property type="molecule type" value="Genomic_DNA"/>
</dbReference>
<dbReference type="RefSeq" id="WP_012039210.1">
    <property type="nucleotide sequence ID" value="NC_009480.1"/>
</dbReference>
<dbReference type="SMR" id="A5CU17"/>
<dbReference type="KEGG" id="cmi:CMM_2521"/>
<dbReference type="eggNOG" id="COG0190">
    <property type="taxonomic scope" value="Bacteria"/>
</dbReference>
<dbReference type="HOGENOM" id="CLU_034045_3_0_11"/>
<dbReference type="OrthoDB" id="9803580at2"/>
<dbReference type="UniPathway" id="UPA00193"/>
<dbReference type="Proteomes" id="UP000001564">
    <property type="component" value="Chromosome"/>
</dbReference>
<dbReference type="GO" id="GO:0005829">
    <property type="term" value="C:cytosol"/>
    <property type="evidence" value="ECO:0007669"/>
    <property type="project" value="TreeGrafter"/>
</dbReference>
<dbReference type="GO" id="GO:0004477">
    <property type="term" value="F:methenyltetrahydrofolate cyclohydrolase activity"/>
    <property type="evidence" value="ECO:0007669"/>
    <property type="project" value="UniProtKB-UniRule"/>
</dbReference>
<dbReference type="GO" id="GO:0004488">
    <property type="term" value="F:methylenetetrahydrofolate dehydrogenase (NADP+) activity"/>
    <property type="evidence" value="ECO:0007669"/>
    <property type="project" value="UniProtKB-UniRule"/>
</dbReference>
<dbReference type="GO" id="GO:0000105">
    <property type="term" value="P:L-histidine biosynthetic process"/>
    <property type="evidence" value="ECO:0007669"/>
    <property type="project" value="UniProtKB-KW"/>
</dbReference>
<dbReference type="GO" id="GO:0009086">
    <property type="term" value="P:methionine biosynthetic process"/>
    <property type="evidence" value="ECO:0007669"/>
    <property type="project" value="UniProtKB-KW"/>
</dbReference>
<dbReference type="GO" id="GO:0006164">
    <property type="term" value="P:purine nucleotide biosynthetic process"/>
    <property type="evidence" value="ECO:0007669"/>
    <property type="project" value="UniProtKB-KW"/>
</dbReference>
<dbReference type="GO" id="GO:0035999">
    <property type="term" value="P:tetrahydrofolate interconversion"/>
    <property type="evidence" value="ECO:0007669"/>
    <property type="project" value="UniProtKB-UniRule"/>
</dbReference>
<dbReference type="CDD" id="cd01080">
    <property type="entry name" value="NAD_bind_m-THF_DH_Cyclohyd"/>
    <property type="match status" value="1"/>
</dbReference>
<dbReference type="FunFam" id="3.40.50.720:FF:000094">
    <property type="entry name" value="Bifunctional protein FolD"/>
    <property type="match status" value="1"/>
</dbReference>
<dbReference type="FunFam" id="3.40.50.10860:FF:000005">
    <property type="entry name" value="C-1-tetrahydrofolate synthase, cytoplasmic, putative"/>
    <property type="match status" value="1"/>
</dbReference>
<dbReference type="Gene3D" id="3.40.50.10860">
    <property type="entry name" value="Leucine Dehydrogenase, chain A, domain 1"/>
    <property type="match status" value="1"/>
</dbReference>
<dbReference type="Gene3D" id="3.40.50.720">
    <property type="entry name" value="NAD(P)-binding Rossmann-like Domain"/>
    <property type="match status" value="1"/>
</dbReference>
<dbReference type="HAMAP" id="MF_01576">
    <property type="entry name" value="THF_DHG_CYH"/>
    <property type="match status" value="1"/>
</dbReference>
<dbReference type="InterPro" id="IPR046346">
    <property type="entry name" value="Aminoacid_DH-like_N_sf"/>
</dbReference>
<dbReference type="InterPro" id="IPR036291">
    <property type="entry name" value="NAD(P)-bd_dom_sf"/>
</dbReference>
<dbReference type="InterPro" id="IPR000672">
    <property type="entry name" value="THF_DH/CycHdrlase"/>
</dbReference>
<dbReference type="InterPro" id="IPR020630">
    <property type="entry name" value="THF_DH/CycHdrlase_cat_dom"/>
</dbReference>
<dbReference type="InterPro" id="IPR020631">
    <property type="entry name" value="THF_DH/CycHdrlase_NAD-bd_dom"/>
</dbReference>
<dbReference type="NCBIfam" id="NF010789">
    <property type="entry name" value="PRK14193.1"/>
    <property type="match status" value="1"/>
</dbReference>
<dbReference type="PANTHER" id="PTHR48099:SF5">
    <property type="entry name" value="C-1-TETRAHYDROFOLATE SYNTHASE, CYTOPLASMIC"/>
    <property type="match status" value="1"/>
</dbReference>
<dbReference type="PANTHER" id="PTHR48099">
    <property type="entry name" value="C-1-TETRAHYDROFOLATE SYNTHASE, CYTOPLASMIC-RELATED"/>
    <property type="match status" value="1"/>
</dbReference>
<dbReference type="Pfam" id="PF00763">
    <property type="entry name" value="THF_DHG_CYH"/>
    <property type="match status" value="1"/>
</dbReference>
<dbReference type="Pfam" id="PF02882">
    <property type="entry name" value="THF_DHG_CYH_C"/>
    <property type="match status" value="1"/>
</dbReference>
<dbReference type="PRINTS" id="PR00085">
    <property type="entry name" value="THFDHDRGNASE"/>
</dbReference>
<dbReference type="SUPFAM" id="SSF53223">
    <property type="entry name" value="Aminoacid dehydrogenase-like, N-terminal domain"/>
    <property type="match status" value="1"/>
</dbReference>
<dbReference type="SUPFAM" id="SSF51735">
    <property type="entry name" value="NAD(P)-binding Rossmann-fold domains"/>
    <property type="match status" value="1"/>
</dbReference>
<proteinExistence type="inferred from homology"/>
<gene>
    <name evidence="1" type="primary">folD</name>
    <name type="ordered locus">CMM_2521</name>
</gene>
<evidence type="ECO:0000255" key="1">
    <source>
        <dbReference type="HAMAP-Rule" id="MF_01576"/>
    </source>
</evidence>